<organism>
    <name type="scientific">Dictyostelium discoideum</name>
    <name type="common">Social amoeba</name>
    <dbReference type="NCBI Taxonomy" id="44689"/>
    <lineage>
        <taxon>Eukaryota</taxon>
        <taxon>Amoebozoa</taxon>
        <taxon>Evosea</taxon>
        <taxon>Eumycetozoa</taxon>
        <taxon>Dictyostelia</taxon>
        <taxon>Dictyosteliales</taxon>
        <taxon>Dictyosteliaceae</taxon>
        <taxon>Dictyostelium</taxon>
    </lineage>
</organism>
<accession>Q54R47</accession>
<evidence type="ECO:0000250" key="1"/>
<evidence type="ECO:0000255" key="2"/>
<evidence type="ECO:0000305" key="3"/>
<proteinExistence type="inferred from homology"/>
<name>GCDH_DICDI</name>
<comment type="catalytic activity">
    <reaction>
        <text>glutaryl-CoA + oxidized [electron-transfer flavoprotein] + 2 H(+) = (2E)-butenoyl-CoA + reduced [electron-transfer flavoprotein] + CO2</text>
        <dbReference type="Rhea" id="RHEA:13389"/>
        <dbReference type="Rhea" id="RHEA-COMP:10685"/>
        <dbReference type="Rhea" id="RHEA-COMP:10686"/>
        <dbReference type="ChEBI" id="CHEBI:15378"/>
        <dbReference type="ChEBI" id="CHEBI:16526"/>
        <dbReference type="ChEBI" id="CHEBI:57332"/>
        <dbReference type="ChEBI" id="CHEBI:57378"/>
        <dbReference type="ChEBI" id="CHEBI:57692"/>
        <dbReference type="ChEBI" id="CHEBI:58307"/>
        <dbReference type="EC" id="1.3.8.6"/>
    </reaction>
</comment>
<comment type="cofactor">
    <cofactor evidence="1">
        <name>FAD</name>
        <dbReference type="ChEBI" id="CHEBI:57692"/>
    </cofactor>
</comment>
<comment type="pathway">
    <text>Amino-acid metabolism; lysine degradation.</text>
</comment>
<comment type="pathway">
    <text>Amino-acid metabolism; tryptophan metabolism.</text>
</comment>
<comment type="subcellular location">
    <subcellularLocation>
        <location evidence="3">Mitochondrion matrix</location>
    </subcellularLocation>
</comment>
<comment type="similarity">
    <text evidence="3">Belongs to the acyl-CoA dehydrogenase family.</text>
</comment>
<gene>
    <name type="primary">gcdh</name>
    <name type="ORF">DDB_G0283411</name>
</gene>
<keyword id="KW-0274">FAD</keyword>
<keyword id="KW-0285">Flavoprotein</keyword>
<keyword id="KW-0496">Mitochondrion</keyword>
<keyword id="KW-0560">Oxidoreductase</keyword>
<keyword id="KW-1185">Reference proteome</keyword>
<keyword id="KW-0809">Transit peptide</keyword>
<dbReference type="EC" id="1.3.8.6"/>
<dbReference type="EMBL" id="AAFI02000055">
    <property type="protein sequence ID" value="EAL65690.1"/>
    <property type="molecule type" value="Genomic_DNA"/>
</dbReference>
<dbReference type="RefSeq" id="XP_639044.1">
    <property type="nucleotide sequence ID" value="XM_633952.1"/>
</dbReference>
<dbReference type="SMR" id="Q54R47"/>
<dbReference type="FunCoup" id="Q54R47">
    <property type="interactions" value="347"/>
</dbReference>
<dbReference type="STRING" id="44689.Q54R47"/>
<dbReference type="PaxDb" id="44689-DDB0234151"/>
<dbReference type="EnsemblProtists" id="EAL65690">
    <property type="protein sequence ID" value="EAL65690"/>
    <property type="gene ID" value="DDB_G0283411"/>
</dbReference>
<dbReference type="GeneID" id="8624069"/>
<dbReference type="KEGG" id="ddi:DDB_G0283411"/>
<dbReference type="dictyBase" id="DDB_G0283411">
    <property type="gene designation" value="gcdh"/>
</dbReference>
<dbReference type="VEuPathDB" id="AmoebaDB:DDB_G0283411"/>
<dbReference type="eggNOG" id="KOG0138">
    <property type="taxonomic scope" value="Eukaryota"/>
</dbReference>
<dbReference type="HOGENOM" id="CLU_018204_8_0_1"/>
<dbReference type="InParanoid" id="Q54R47"/>
<dbReference type="OMA" id="HMMNLES"/>
<dbReference type="PhylomeDB" id="Q54R47"/>
<dbReference type="Reactome" id="R-DDI-71064">
    <property type="pathway name" value="Lysine catabolism"/>
</dbReference>
<dbReference type="UniPathway" id="UPA00224"/>
<dbReference type="UniPathway" id="UPA00225"/>
<dbReference type="PRO" id="PR:Q54R47"/>
<dbReference type="Proteomes" id="UP000002195">
    <property type="component" value="Chromosome 4"/>
</dbReference>
<dbReference type="GO" id="GO:0005759">
    <property type="term" value="C:mitochondrial matrix"/>
    <property type="evidence" value="ECO:0007669"/>
    <property type="project" value="UniProtKB-SubCell"/>
</dbReference>
<dbReference type="GO" id="GO:0005739">
    <property type="term" value="C:mitochondrion"/>
    <property type="evidence" value="ECO:0000250"/>
    <property type="project" value="dictyBase"/>
</dbReference>
<dbReference type="GO" id="GO:0000062">
    <property type="term" value="F:fatty-acyl-CoA binding"/>
    <property type="evidence" value="ECO:0000318"/>
    <property type="project" value="GO_Central"/>
</dbReference>
<dbReference type="GO" id="GO:0050660">
    <property type="term" value="F:flavin adenine dinucleotide binding"/>
    <property type="evidence" value="ECO:0000318"/>
    <property type="project" value="GO_Central"/>
</dbReference>
<dbReference type="GO" id="GO:0004361">
    <property type="term" value="F:glutaryl-CoA dehydrogenase activity"/>
    <property type="evidence" value="ECO:0000318"/>
    <property type="project" value="GO_Central"/>
</dbReference>
<dbReference type="GO" id="GO:0033539">
    <property type="term" value="P:fatty acid beta-oxidation using acyl-CoA dehydrogenase"/>
    <property type="evidence" value="ECO:0000318"/>
    <property type="project" value="GO_Central"/>
</dbReference>
<dbReference type="GO" id="GO:0046949">
    <property type="term" value="P:fatty-acyl-CoA biosynthetic process"/>
    <property type="evidence" value="ECO:0000318"/>
    <property type="project" value="GO_Central"/>
</dbReference>
<dbReference type="GO" id="GO:0006568">
    <property type="term" value="P:L-tryptophan metabolic process"/>
    <property type="evidence" value="ECO:0007669"/>
    <property type="project" value="UniProtKB-UniPathway"/>
</dbReference>
<dbReference type="CDD" id="cd01151">
    <property type="entry name" value="GCD"/>
    <property type="match status" value="1"/>
</dbReference>
<dbReference type="FunFam" id="1.20.140.10:FF:000006">
    <property type="entry name" value="Glutaryl-CoA dehydrogenase, mitochondrial"/>
    <property type="match status" value="1"/>
</dbReference>
<dbReference type="FunFam" id="2.40.110.10:FF:000008">
    <property type="entry name" value="Glutaryl-CoA dehydrogenase, mitochondrial"/>
    <property type="match status" value="1"/>
</dbReference>
<dbReference type="FunFam" id="1.10.540.10:FF:000003">
    <property type="entry name" value="glutaryl-CoA dehydrogenase, mitochondrial"/>
    <property type="match status" value="1"/>
</dbReference>
<dbReference type="Gene3D" id="1.10.540.10">
    <property type="entry name" value="Acyl-CoA dehydrogenase/oxidase, N-terminal domain"/>
    <property type="match status" value="1"/>
</dbReference>
<dbReference type="Gene3D" id="2.40.110.10">
    <property type="entry name" value="Butyryl-CoA Dehydrogenase, subunit A, domain 2"/>
    <property type="match status" value="1"/>
</dbReference>
<dbReference type="Gene3D" id="1.20.140.10">
    <property type="entry name" value="Butyryl-CoA Dehydrogenase, subunit A, domain 3"/>
    <property type="match status" value="1"/>
</dbReference>
<dbReference type="InterPro" id="IPR006089">
    <property type="entry name" value="Acyl-CoA_DH_CS"/>
</dbReference>
<dbReference type="InterPro" id="IPR006091">
    <property type="entry name" value="Acyl-CoA_Oxase/DH_mid-dom"/>
</dbReference>
<dbReference type="InterPro" id="IPR046373">
    <property type="entry name" value="Acyl-CoA_Oxase/DH_mid-dom_sf"/>
</dbReference>
<dbReference type="InterPro" id="IPR036250">
    <property type="entry name" value="AcylCo_DH-like_C"/>
</dbReference>
<dbReference type="InterPro" id="IPR009075">
    <property type="entry name" value="AcylCo_DH/oxidase_C"/>
</dbReference>
<dbReference type="InterPro" id="IPR013786">
    <property type="entry name" value="AcylCoA_DH/ox_N"/>
</dbReference>
<dbReference type="InterPro" id="IPR037069">
    <property type="entry name" value="AcylCoA_DH/ox_N_sf"/>
</dbReference>
<dbReference type="InterPro" id="IPR009100">
    <property type="entry name" value="AcylCoA_DH/oxidase_NM_dom_sf"/>
</dbReference>
<dbReference type="InterPro" id="IPR052033">
    <property type="entry name" value="Glutaryl-CoA_DH_mitochondrial"/>
</dbReference>
<dbReference type="PANTHER" id="PTHR42807">
    <property type="entry name" value="GLUTARYL-COA DEHYDROGENASE, MITOCHONDRIAL"/>
    <property type="match status" value="1"/>
</dbReference>
<dbReference type="PANTHER" id="PTHR42807:SF1">
    <property type="entry name" value="GLUTARYL-COA DEHYDROGENASE, MITOCHONDRIAL"/>
    <property type="match status" value="1"/>
</dbReference>
<dbReference type="Pfam" id="PF00441">
    <property type="entry name" value="Acyl-CoA_dh_1"/>
    <property type="match status" value="1"/>
</dbReference>
<dbReference type="Pfam" id="PF02770">
    <property type="entry name" value="Acyl-CoA_dh_M"/>
    <property type="match status" value="1"/>
</dbReference>
<dbReference type="Pfam" id="PF02771">
    <property type="entry name" value="Acyl-CoA_dh_N"/>
    <property type="match status" value="1"/>
</dbReference>
<dbReference type="SUPFAM" id="SSF47203">
    <property type="entry name" value="Acyl-CoA dehydrogenase C-terminal domain-like"/>
    <property type="match status" value="1"/>
</dbReference>
<dbReference type="SUPFAM" id="SSF56645">
    <property type="entry name" value="Acyl-CoA dehydrogenase NM domain-like"/>
    <property type="match status" value="1"/>
</dbReference>
<dbReference type="PROSITE" id="PS00072">
    <property type="entry name" value="ACYL_COA_DH_1"/>
    <property type="match status" value="1"/>
</dbReference>
<dbReference type="PROSITE" id="PS00073">
    <property type="entry name" value="ACYL_COA_DH_2"/>
    <property type="match status" value="1"/>
</dbReference>
<feature type="transit peptide" description="Mitochondrion" evidence="2">
    <location>
        <begin position="1"/>
        <end status="unknown"/>
    </location>
</feature>
<feature type="chain" id="PRO_0000330829" description="Glutaryl-CoA dehydrogenase, mitochondrial">
    <location>
        <begin status="unknown"/>
        <end position="420"/>
    </location>
</feature>
<feature type="active site" description="Proton acceptor" evidence="1">
    <location>
        <position position="400"/>
    </location>
</feature>
<feature type="binding site" evidence="1">
    <location>
        <begin position="125"/>
        <end position="126"/>
    </location>
    <ligand>
        <name>substrate</name>
    </ligand>
</feature>
<feature type="binding site" evidence="1">
    <location>
        <begin position="164"/>
        <end position="167"/>
    </location>
    <ligand>
        <name>FAD</name>
        <dbReference type="ChEBI" id="CHEBI:57692"/>
    </ligand>
</feature>
<feature type="binding site" evidence="1">
    <location>
        <position position="173"/>
    </location>
    <ligand>
        <name>FAD</name>
        <dbReference type="ChEBI" id="CHEBI:57692"/>
    </ligand>
</feature>
<feature type="binding site" evidence="1">
    <location>
        <position position="173"/>
    </location>
    <ligand>
        <name>substrate</name>
    </ligand>
</feature>
<feature type="binding site" evidence="1">
    <location>
        <begin position="198"/>
        <end position="200"/>
    </location>
    <ligand>
        <name>FAD</name>
        <dbReference type="ChEBI" id="CHEBI:57692"/>
    </ligand>
</feature>
<feature type="binding site" evidence="1">
    <location>
        <begin position="273"/>
        <end position="277"/>
    </location>
    <ligand>
        <name>substrate</name>
    </ligand>
</feature>
<feature type="binding site" evidence="1">
    <location>
        <position position="280"/>
    </location>
    <ligand>
        <name>substrate</name>
    </ligand>
</feature>
<feature type="binding site" evidence="1">
    <location>
        <position position="402"/>
    </location>
    <ligand>
        <name>FAD</name>
        <dbReference type="ChEBI" id="CHEBI:57692"/>
    </ligand>
</feature>
<feature type="binding site" evidence="1">
    <location>
        <position position="420"/>
    </location>
    <ligand>
        <name>FAD</name>
        <dbReference type="ChEBI" id="CHEBI:57692"/>
    </ligand>
</feature>
<reference key="1">
    <citation type="journal article" date="2005" name="Nature">
        <title>The genome of the social amoeba Dictyostelium discoideum.</title>
        <authorList>
            <person name="Eichinger L."/>
            <person name="Pachebat J.A."/>
            <person name="Gloeckner G."/>
            <person name="Rajandream M.A."/>
            <person name="Sucgang R."/>
            <person name="Berriman M."/>
            <person name="Song J."/>
            <person name="Olsen R."/>
            <person name="Szafranski K."/>
            <person name="Xu Q."/>
            <person name="Tunggal B."/>
            <person name="Kummerfeld S."/>
            <person name="Madera M."/>
            <person name="Konfortov B.A."/>
            <person name="Rivero F."/>
            <person name="Bankier A.T."/>
            <person name="Lehmann R."/>
            <person name="Hamlin N."/>
            <person name="Davies R."/>
            <person name="Gaudet P."/>
            <person name="Fey P."/>
            <person name="Pilcher K."/>
            <person name="Chen G."/>
            <person name="Saunders D."/>
            <person name="Sodergren E.J."/>
            <person name="Davis P."/>
            <person name="Kerhornou A."/>
            <person name="Nie X."/>
            <person name="Hall N."/>
            <person name="Anjard C."/>
            <person name="Hemphill L."/>
            <person name="Bason N."/>
            <person name="Farbrother P."/>
            <person name="Desany B."/>
            <person name="Just E."/>
            <person name="Morio T."/>
            <person name="Rost R."/>
            <person name="Churcher C.M."/>
            <person name="Cooper J."/>
            <person name="Haydock S."/>
            <person name="van Driessche N."/>
            <person name="Cronin A."/>
            <person name="Goodhead I."/>
            <person name="Muzny D.M."/>
            <person name="Mourier T."/>
            <person name="Pain A."/>
            <person name="Lu M."/>
            <person name="Harper D."/>
            <person name="Lindsay R."/>
            <person name="Hauser H."/>
            <person name="James K.D."/>
            <person name="Quiles M."/>
            <person name="Madan Babu M."/>
            <person name="Saito T."/>
            <person name="Buchrieser C."/>
            <person name="Wardroper A."/>
            <person name="Felder M."/>
            <person name="Thangavelu M."/>
            <person name="Johnson D."/>
            <person name="Knights A."/>
            <person name="Loulseged H."/>
            <person name="Mungall K.L."/>
            <person name="Oliver K."/>
            <person name="Price C."/>
            <person name="Quail M.A."/>
            <person name="Urushihara H."/>
            <person name="Hernandez J."/>
            <person name="Rabbinowitsch E."/>
            <person name="Steffen D."/>
            <person name="Sanders M."/>
            <person name="Ma J."/>
            <person name="Kohara Y."/>
            <person name="Sharp S."/>
            <person name="Simmonds M.N."/>
            <person name="Spiegler S."/>
            <person name="Tivey A."/>
            <person name="Sugano S."/>
            <person name="White B."/>
            <person name="Walker D."/>
            <person name="Woodward J.R."/>
            <person name="Winckler T."/>
            <person name="Tanaka Y."/>
            <person name="Shaulsky G."/>
            <person name="Schleicher M."/>
            <person name="Weinstock G.M."/>
            <person name="Rosenthal A."/>
            <person name="Cox E.C."/>
            <person name="Chisholm R.L."/>
            <person name="Gibbs R.A."/>
            <person name="Loomis W.F."/>
            <person name="Platzer M."/>
            <person name="Kay R.R."/>
            <person name="Williams J.G."/>
            <person name="Dear P.H."/>
            <person name="Noegel A.A."/>
            <person name="Barrell B.G."/>
            <person name="Kuspa A."/>
        </authorList>
    </citation>
    <scope>NUCLEOTIDE SEQUENCE [LARGE SCALE GENOMIC DNA]</scope>
    <source>
        <strain>AX4</strain>
    </source>
</reference>
<sequence length="420" mass="45875">MLSNLSKSLLSKGKFINKNNLLKNKRSFGTIVPGDKFEWNDPLSLESLLTEEEVMIRDQVNKFCQDELMPRIQMAYRDEKFDREIMREYGKMGMLGATIPAYGGVSHVAYGLMANAVEKVDSGYRSAMSVQSSLVMHPINTFGTDAQKSKYLDGLASGDLVGCFGLTEPNAGSDPAGMQTRAVKNSAGNYVLNGTKTWITNSPIADVFVVWAKVENGDIRGFVLEKGMKGLSAPKIEGKLSLRASITGMIVMEDVEVPPTAMFPEVKGLRGPFSCLNKARYGIGWGSLGAAEFCYSTARQYGLDRKQFGKPLAANQLYQKKLADMATEISLGLQACYQVGRLIDAGKATPERISLIKRNSCGKSLDIARQSRDMLGGNGIADEYHVIRHAANLETVNTYEGTHDIHALILGRAITGIPSF</sequence>
<protein>
    <recommendedName>
        <fullName>Glutaryl-CoA dehydrogenase, mitochondrial</fullName>
        <shortName>GCD</shortName>
        <ecNumber>1.3.8.6</ecNumber>
    </recommendedName>
</protein>